<reference key="1">
    <citation type="journal article" date="2009" name="Genome Res.">
        <title>Comparative genomic analyses of the human fungal pathogens Coccidioides and their relatives.</title>
        <authorList>
            <person name="Sharpton T.J."/>
            <person name="Stajich J.E."/>
            <person name="Rounsley S.D."/>
            <person name="Gardner M.J."/>
            <person name="Wortman J.R."/>
            <person name="Jordar V.S."/>
            <person name="Maiti R."/>
            <person name="Kodira C.D."/>
            <person name="Neafsey D.E."/>
            <person name="Zeng Q."/>
            <person name="Hung C.-Y."/>
            <person name="McMahan C."/>
            <person name="Muszewska A."/>
            <person name="Grynberg M."/>
            <person name="Mandel M.A."/>
            <person name="Kellner E.M."/>
            <person name="Barker B.M."/>
            <person name="Galgiani J.N."/>
            <person name="Orbach M.J."/>
            <person name="Kirkland T.N."/>
            <person name="Cole G.T."/>
            <person name="Henn M.R."/>
            <person name="Birren B.W."/>
            <person name="Taylor J.W."/>
        </authorList>
    </citation>
    <scope>NUCLEOTIDE SEQUENCE [LARGE SCALE GENOMIC DNA]</scope>
    <source>
        <strain>NAm1 / WU24</strain>
    </source>
</reference>
<proteinExistence type="inferred from homology"/>
<evidence type="ECO:0000250" key="1"/>
<evidence type="ECO:0000255" key="2">
    <source>
        <dbReference type="PROSITE-ProRule" id="PRU00541"/>
    </source>
</evidence>
<evidence type="ECO:0000255" key="3">
    <source>
        <dbReference type="PROSITE-ProRule" id="PRU00542"/>
    </source>
</evidence>
<evidence type="ECO:0000305" key="4"/>
<keyword id="KW-0067">ATP-binding</keyword>
<keyword id="KW-0347">Helicase</keyword>
<keyword id="KW-0378">Hydrolase</keyword>
<keyword id="KW-0547">Nucleotide-binding</keyword>
<keyword id="KW-0539">Nucleus</keyword>
<keyword id="KW-1185">Reference proteome</keyword>
<keyword id="KW-0690">Ribosome biogenesis</keyword>
<keyword id="KW-0694">RNA-binding</keyword>
<keyword id="KW-0698">rRNA processing</keyword>
<name>FAL1_AJECN</name>
<gene>
    <name type="primary">FAL1</name>
    <name type="ORF">HCAG_00406</name>
</gene>
<comment type="function">
    <text evidence="1">ATP-dependent RNA helicase involved in 40S ribosomal subunit biogenesis. Required for the processing and cleavage of 35S pre-rRNA at sites A0, A1, and A2, leading to mature 18S rRNA (By similarity).</text>
</comment>
<comment type="catalytic activity">
    <reaction>
        <text>ATP + H2O = ADP + phosphate + H(+)</text>
        <dbReference type="Rhea" id="RHEA:13065"/>
        <dbReference type="ChEBI" id="CHEBI:15377"/>
        <dbReference type="ChEBI" id="CHEBI:15378"/>
        <dbReference type="ChEBI" id="CHEBI:30616"/>
        <dbReference type="ChEBI" id="CHEBI:43474"/>
        <dbReference type="ChEBI" id="CHEBI:456216"/>
        <dbReference type="EC" id="3.6.4.13"/>
    </reaction>
</comment>
<comment type="subcellular location">
    <subcellularLocation>
        <location evidence="1">Nucleus</location>
        <location evidence="1">Nucleolus</location>
    </subcellularLocation>
</comment>
<comment type="domain">
    <text>The Q motif is unique to and characteristic of the DEAD box family of RNA helicases and controls ATP binding and hydrolysis.</text>
</comment>
<comment type="similarity">
    <text evidence="4">Belongs to the DEAD box helicase family. DDX48/FAL1 subfamily.</text>
</comment>
<feature type="chain" id="PRO_0000310175" description="ATP-dependent RNA helicase FAL1">
    <location>
        <begin position="1"/>
        <end position="450"/>
    </location>
</feature>
<feature type="domain" description="Helicase ATP-binding" evidence="2">
    <location>
        <begin position="56"/>
        <end position="226"/>
    </location>
</feature>
<feature type="domain" description="Helicase C-terminal" evidence="3">
    <location>
        <begin position="237"/>
        <end position="398"/>
    </location>
</feature>
<feature type="short sequence motif" description="Q motif">
    <location>
        <begin position="25"/>
        <end position="53"/>
    </location>
</feature>
<feature type="short sequence motif" description="DEAD box">
    <location>
        <begin position="174"/>
        <end position="177"/>
    </location>
</feature>
<feature type="binding site" evidence="2">
    <location>
        <begin position="69"/>
        <end position="76"/>
    </location>
    <ligand>
        <name>ATP</name>
        <dbReference type="ChEBI" id="CHEBI:30616"/>
    </ligand>
</feature>
<sequence length="450" mass="51476">MADGIDRTAEERMEFTTSKEVTVAPTFEDMHLKENLLRGIYAYGYESPSAVQSRAIVQICKGRDTIAQAQSGTGKTATFSISILQVIDTVLRETQALVLSPTRELATQIQSVVMALGDYMNVQCHACIGGTNVGEDIRKLDHGQHVVSGTPGRVADMIRRRHLRTRHIKMLVLDEADELLNRGFREQIYDVYRYLPPATQVVVVSATLPYDVLDMTTKFMTDPVRILVKRDELTLEGLKQYFIAVEKEEWKFDTLCDLYDTLTITQAVIFCNTRRKVDWLTDKMREANFTVSSMHGEMPQKERDSIMQDFRQGNSRVLISTDVWARGIDVQQVSLVINYDLPSNRENYIHRIGRSGRFGRKGVAINFVTSEDVRILRDIELYYSTQIDEMPMNGTLFYLRYRPMSRLSLWLTQSNSCRPSHVTTLSWSTNVEHTFPLLLMNAFSKIQIGI</sequence>
<protein>
    <recommendedName>
        <fullName>ATP-dependent RNA helicase FAL1</fullName>
        <ecNumber>3.6.4.13</ecNumber>
    </recommendedName>
</protein>
<accession>A6QSQ0</accession>
<dbReference type="EC" id="3.6.4.13"/>
<dbReference type="EMBL" id="CH476655">
    <property type="protein sequence ID" value="EDN02542.1"/>
    <property type="molecule type" value="Genomic_DNA"/>
</dbReference>
<dbReference type="SMR" id="A6QSQ0"/>
<dbReference type="STRING" id="339724.A6QSQ0"/>
<dbReference type="KEGG" id="aje:HCAG_00406"/>
<dbReference type="VEuPathDB" id="FungiDB:HCAG_00406"/>
<dbReference type="HOGENOM" id="CLU_003041_1_0_1"/>
<dbReference type="OMA" id="TRFHDFK"/>
<dbReference type="OrthoDB" id="933at299071"/>
<dbReference type="Proteomes" id="UP000009297">
    <property type="component" value="Unassembled WGS sequence"/>
</dbReference>
<dbReference type="GO" id="GO:0005730">
    <property type="term" value="C:nucleolus"/>
    <property type="evidence" value="ECO:0007669"/>
    <property type="project" value="UniProtKB-SubCell"/>
</dbReference>
<dbReference type="GO" id="GO:0005524">
    <property type="term" value="F:ATP binding"/>
    <property type="evidence" value="ECO:0007669"/>
    <property type="project" value="UniProtKB-KW"/>
</dbReference>
<dbReference type="GO" id="GO:0016887">
    <property type="term" value="F:ATP hydrolysis activity"/>
    <property type="evidence" value="ECO:0007669"/>
    <property type="project" value="RHEA"/>
</dbReference>
<dbReference type="GO" id="GO:0003723">
    <property type="term" value="F:RNA binding"/>
    <property type="evidence" value="ECO:0007669"/>
    <property type="project" value="UniProtKB-KW"/>
</dbReference>
<dbReference type="GO" id="GO:0003724">
    <property type="term" value="F:RNA helicase activity"/>
    <property type="evidence" value="ECO:0007669"/>
    <property type="project" value="UniProtKB-EC"/>
</dbReference>
<dbReference type="GO" id="GO:0006364">
    <property type="term" value="P:rRNA processing"/>
    <property type="evidence" value="ECO:0007669"/>
    <property type="project" value="UniProtKB-KW"/>
</dbReference>
<dbReference type="CDD" id="cd18045">
    <property type="entry name" value="DEADc_EIF4AIII_DDX48"/>
    <property type="match status" value="1"/>
</dbReference>
<dbReference type="CDD" id="cd18787">
    <property type="entry name" value="SF2_C_DEAD"/>
    <property type="match status" value="1"/>
</dbReference>
<dbReference type="FunFam" id="3.40.50.300:FF:000031">
    <property type="entry name" value="Eukaryotic initiation factor 4A-III"/>
    <property type="match status" value="1"/>
</dbReference>
<dbReference type="FunFam" id="3.40.50.300:FF:000498">
    <property type="entry name" value="Eukaryotic initiation factor 4A-III"/>
    <property type="match status" value="1"/>
</dbReference>
<dbReference type="Gene3D" id="3.40.50.300">
    <property type="entry name" value="P-loop containing nucleotide triphosphate hydrolases"/>
    <property type="match status" value="2"/>
</dbReference>
<dbReference type="InterPro" id="IPR011545">
    <property type="entry name" value="DEAD/DEAH_box_helicase_dom"/>
</dbReference>
<dbReference type="InterPro" id="IPR014001">
    <property type="entry name" value="Helicase_ATP-bd"/>
</dbReference>
<dbReference type="InterPro" id="IPR001650">
    <property type="entry name" value="Helicase_C-like"/>
</dbReference>
<dbReference type="InterPro" id="IPR027417">
    <property type="entry name" value="P-loop_NTPase"/>
</dbReference>
<dbReference type="InterPro" id="IPR000629">
    <property type="entry name" value="RNA-helicase_DEAD-box_CS"/>
</dbReference>
<dbReference type="InterPro" id="IPR014014">
    <property type="entry name" value="RNA_helicase_DEAD_Q_motif"/>
</dbReference>
<dbReference type="PANTHER" id="PTHR47958">
    <property type="entry name" value="ATP-DEPENDENT RNA HELICASE DBP3"/>
    <property type="match status" value="1"/>
</dbReference>
<dbReference type="Pfam" id="PF00270">
    <property type="entry name" value="DEAD"/>
    <property type="match status" value="1"/>
</dbReference>
<dbReference type="Pfam" id="PF00271">
    <property type="entry name" value="Helicase_C"/>
    <property type="match status" value="1"/>
</dbReference>
<dbReference type="SMART" id="SM00487">
    <property type="entry name" value="DEXDc"/>
    <property type="match status" value="1"/>
</dbReference>
<dbReference type="SMART" id="SM00490">
    <property type="entry name" value="HELICc"/>
    <property type="match status" value="1"/>
</dbReference>
<dbReference type="SUPFAM" id="SSF52540">
    <property type="entry name" value="P-loop containing nucleoside triphosphate hydrolases"/>
    <property type="match status" value="1"/>
</dbReference>
<dbReference type="PROSITE" id="PS00039">
    <property type="entry name" value="DEAD_ATP_HELICASE"/>
    <property type="match status" value="1"/>
</dbReference>
<dbReference type="PROSITE" id="PS51192">
    <property type="entry name" value="HELICASE_ATP_BIND_1"/>
    <property type="match status" value="1"/>
</dbReference>
<dbReference type="PROSITE" id="PS51194">
    <property type="entry name" value="HELICASE_CTER"/>
    <property type="match status" value="1"/>
</dbReference>
<dbReference type="PROSITE" id="PS51195">
    <property type="entry name" value="Q_MOTIF"/>
    <property type="match status" value="1"/>
</dbReference>
<organism>
    <name type="scientific">Ajellomyces capsulatus (strain NAm1 / WU24)</name>
    <name type="common">Darling's disease fungus</name>
    <name type="synonym">Histoplasma capsulatum</name>
    <dbReference type="NCBI Taxonomy" id="2059318"/>
    <lineage>
        <taxon>Eukaryota</taxon>
        <taxon>Fungi</taxon>
        <taxon>Dikarya</taxon>
        <taxon>Ascomycota</taxon>
        <taxon>Pezizomycotina</taxon>
        <taxon>Eurotiomycetes</taxon>
        <taxon>Eurotiomycetidae</taxon>
        <taxon>Onygenales</taxon>
        <taxon>Ajellomycetaceae</taxon>
        <taxon>Histoplasma</taxon>
    </lineage>
</organism>